<keyword id="KW-0998">Cell outer membrane</keyword>
<keyword id="KW-0449">Lipoprotein</keyword>
<keyword id="KW-0472">Membrane</keyword>
<keyword id="KW-0564">Palmitate</keyword>
<keyword id="KW-1185">Reference proteome</keyword>
<keyword id="KW-0732">Signal</keyword>
<dbReference type="EMBL" id="AL591688">
    <property type="protein sequence ID" value="CAC47639.1"/>
    <property type="molecule type" value="Genomic_DNA"/>
</dbReference>
<dbReference type="RefSeq" id="NP_387166.1">
    <property type="nucleotide sequence ID" value="NC_003047.1"/>
</dbReference>
<dbReference type="RefSeq" id="WP_003530248.1">
    <property type="nucleotide sequence ID" value="NC_003047.1"/>
</dbReference>
<dbReference type="SMR" id="Q926C0"/>
<dbReference type="EnsemblBacteria" id="CAC47639">
    <property type="protein sequence ID" value="CAC47639"/>
    <property type="gene ID" value="SMc02475"/>
</dbReference>
<dbReference type="KEGG" id="sme:SMc02475"/>
<dbReference type="PATRIC" id="fig|266834.11.peg.4594"/>
<dbReference type="eggNOG" id="COG2845">
    <property type="taxonomic scope" value="Bacteria"/>
</dbReference>
<dbReference type="HOGENOM" id="CLU_103254_1_0_5"/>
<dbReference type="OrthoDB" id="7677911at2"/>
<dbReference type="Proteomes" id="UP000001976">
    <property type="component" value="Chromosome"/>
</dbReference>
<dbReference type="GO" id="GO:0009279">
    <property type="term" value="C:cell outer membrane"/>
    <property type="evidence" value="ECO:0007669"/>
    <property type="project" value="UniProtKB-SubCell"/>
</dbReference>
<dbReference type="GO" id="GO:0004866">
    <property type="term" value="F:endopeptidase inhibitor activity"/>
    <property type="evidence" value="ECO:0007669"/>
    <property type="project" value="InterPro"/>
</dbReference>
<dbReference type="Gene3D" id="2.40.128.10">
    <property type="match status" value="1"/>
</dbReference>
<dbReference type="InterPro" id="IPR021140">
    <property type="entry name" value="Inh/Omp19"/>
</dbReference>
<dbReference type="InterPro" id="IPR010571">
    <property type="entry name" value="OM_lipoprot_Omp19_bac"/>
</dbReference>
<dbReference type="InterPro" id="IPR016085">
    <property type="entry name" value="Protease_inh_b-brl_dom"/>
</dbReference>
<dbReference type="Pfam" id="PF02974">
    <property type="entry name" value="Inh"/>
    <property type="match status" value="1"/>
</dbReference>
<dbReference type="PIRSF" id="PIRSF034005">
    <property type="entry name" value="OM_lipoprot_Omp19_bac"/>
    <property type="match status" value="1"/>
</dbReference>
<dbReference type="SUPFAM" id="SSF50882">
    <property type="entry name" value="beta-Barrel protease inhibitors"/>
    <property type="match status" value="1"/>
</dbReference>
<dbReference type="PROSITE" id="PS51257">
    <property type="entry name" value="PROKAR_LIPOPROTEIN"/>
    <property type="match status" value="1"/>
</dbReference>
<feature type="signal peptide" evidence="2">
    <location>
        <begin position="1"/>
        <end position="18"/>
    </location>
</feature>
<feature type="chain" id="PRO_0000018248" description="Outer membrane lipoprotein omp19 homolog">
    <location>
        <begin position="19"/>
        <end position="179"/>
    </location>
</feature>
<feature type="region of interest" description="Disordered" evidence="3">
    <location>
        <begin position="32"/>
        <end position="72"/>
    </location>
</feature>
<feature type="compositionally biased region" description="Low complexity" evidence="3">
    <location>
        <begin position="62"/>
        <end position="72"/>
    </location>
</feature>
<feature type="lipid moiety-binding region" description="N-palmitoyl cysteine" evidence="2">
    <location>
        <position position="19"/>
    </location>
</feature>
<feature type="lipid moiety-binding region" description="S-diacylglycerol cysteine" evidence="2">
    <location>
        <position position="19"/>
    </location>
</feature>
<protein>
    <recommendedName>
        <fullName>Outer membrane lipoprotein omp19 homolog</fullName>
    </recommendedName>
</protein>
<gene>
    <name type="primary">omp19</name>
    <name type="ordered locus">R03060</name>
    <name type="ORF">SMc02475</name>
</gene>
<comment type="subcellular location">
    <subcellularLocation>
        <location evidence="1">Cell outer membrane</location>
        <topology evidence="2">Lipid-anchor</topology>
    </subcellularLocation>
</comment>
<comment type="similarity">
    <text evidence="4">Belongs to the rhizobiaceae omp19 lipoprotein family.</text>
</comment>
<accession>Q926C0</accession>
<name>OMP19_RHIME</name>
<proteinExistence type="inferred from homology"/>
<organism>
    <name type="scientific">Rhizobium meliloti (strain 1021)</name>
    <name type="common">Ensifer meliloti</name>
    <name type="synonym">Sinorhizobium meliloti</name>
    <dbReference type="NCBI Taxonomy" id="266834"/>
    <lineage>
        <taxon>Bacteria</taxon>
        <taxon>Pseudomonadati</taxon>
        <taxon>Pseudomonadota</taxon>
        <taxon>Alphaproteobacteria</taxon>
        <taxon>Hyphomicrobiales</taxon>
        <taxon>Rhizobiaceae</taxon>
        <taxon>Sinorhizobium/Ensifer group</taxon>
        <taxon>Sinorhizobium</taxon>
    </lineage>
</organism>
<sequence length="179" mass="17776">MRVSHAAAGLAVVLALTGCQRTSFGGFGSQDVSRAPAPLQAQPVPSVSAGQLPPPAGASQFPAAPTTGTAAPGAAAGTEVAAATNALDVTKESMVGNWRVSSAGSSCDMFLTLTNLGSGSRGGTRGCAGELTAMGSWEVAGKQVVLKDRSGNPIARLYKTADARFDGSTNGGQPVSLSR</sequence>
<evidence type="ECO:0000250" key="1"/>
<evidence type="ECO:0000255" key="2">
    <source>
        <dbReference type="PROSITE-ProRule" id="PRU00303"/>
    </source>
</evidence>
<evidence type="ECO:0000256" key="3">
    <source>
        <dbReference type="SAM" id="MobiDB-lite"/>
    </source>
</evidence>
<evidence type="ECO:0000305" key="4"/>
<reference key="1">
    <citation type="journal article" date="2001" name="Proc. Natl. Acad. Sci. U.S.A.">
        <title>Analysis of the chromosome sequence of the legume symbiont Sinorhizobium meliloti strain 1021.</title>
        <authorList>
            <person name="Capela D."/>
            <person name="Barloy-Hubler F."/>
            <person name="Gouzy J."/>
            <person name="Bothe G."/>
            <person name="Ampe F."/>
            <person name="Batut J."/>
            <person name="Boistard P."/>
            <person name="Becker A."/>
            <person name="Boutry M."/>
            <person name="Cadieu E."/>
            <person name="Dreano S."/>
            <person name="Gloux S."/>
            <person name="Godrie T."/>
            <person name="Goffeau A."/>
            <person name="Kahn D."/>
            <person name="Kiss E."/>
            <person name="Lelaure V."/>
            <person name="Masuy D."/>
            <person name="Pohl T."/>
            <person name="Portetelle D."/>
            <person name="Puehler A."/>
            <person name="Purnelle B."/>
            <person name="Ramsperger U."/>
            <person name="Renard C."/>
            <person name="Thebault P."/>
            <person name="Vandenbol M."/>
            <person name="Weidner S."/>
            <person name="Galibert F."/>
        </authorList>
    </citation>
    <scope>NUCLEOTIDE SEQUENCE [LARGE SCALE GENOMIC DNA]</scope>
    <source>
        <strain>1021</strain>
    </source>
</reference>
<reference key="2">
    <citation type="journal article" date="2001" name="Science">
        <title>The composite genome of the legume symbiont Sinorhizobium meliloti.</title>
        <authorList>
            <person name="Galibert F."/>
            <person name="Finan T.M."/>
            <person name="Long S.R."/>
            <person name="Puehler A."/>
            <person name="Abola P."/>
            <person name="Ampe F."/>
            <person name="Barloy-Hubler F."/>
            <person name="Barnett M.J."/>
            <person name="Becker A."/>
            <person name="Boistard P."/>
            <person name="Bothe G."/>
            <person name="Boutry M."/>
            <person name="Bowser L."/>
            <person name="Buhrmester J."/>
            <person name="Cadieu E."/>
            <person name="Capela D."/>
            <person name="Chain P."/>
            <person name="Cowie A."/>
            <person name="Davis R.W."/>
            <person name="Dreano S."/>
            <person name="Federspiel N.A."/>
            <person name="Fisher R.F."/>
            <person name="Gloux S."/>
            <person name="Godrie T."/>
            <person name="Goffeau A."/>
            <person name="Golding B."/>
            <person name="Gouzy J."/>
            <person name="Gurjal M."/>
            <person name="Hernandez-Lucas I."/>
            <person name="Hong A."/>
            <person name="Huizar L."/>
            <person name="Hyman R.W."/>
            <person name="Jones T."/>
            <person name="Kahn D."/>
            <person name="Kahn M.L."/>
            <person name="Kalman S."/>
            <person name="Keating D.H."/>
            <person name="Kiss E."/>
            <person name="Komp C."/>
            <person name="Lelaure V."/>
            <person name="Masuy D."/>
            <person name="Palm C."/>
            <person name="Peck M.C."/>
            <person name="Pohl T.M."/>
            <person name="Portetelle D."/>
            <person name="Purnelle B."/>
            <person name="Ramsperger U."/>
            <person name="Surzycki R."/>
            <person name="Thebault P."/>
            <person name="Vandenbol M."/>
            <person name="Vorhoelter F.J."/>
            <person name="Weidner S."/>
            <person name="Wells D.H."/>
            <person name="Wong K."/>
            <person name="Yeh K.-C."/>
            <person name="Batut J."/>
        </authorList>
    </citation>
    <scope>NUCLEOTIDE SEQUENCE [LARGE SCALE GENOMIC DNA]</scope>
    <source>
        <strain>1021</strain>
    </source>
</reference>